<organism>
    <name type="scientific">Francisella tularensis subsp. holarctica (strain OSU18)</name>
    <dbReference type="NCBI Taxonomy" id="393011"/>
    <lineage>
        <taxon>Bacteria</taxon>
        <taxon>Pseudomonadati</taxon>
        <taxon>Pseudomonadota</taxon>
        <taxon>Gammaproteobacteria</taxon>
        <taxon>Thiotrichales</taxon>
        <taxon>Francisellaceae</taxon>
        <taxon>Francisella</taxon>
    </lineage>
</organism>
<reference key="1">
    <citation type="journal article" date="2006" name="J. Bacteriol.">
        <title>Chromosome rearrangement and diversification of Francisella tularensis revealed by the type B (OSU18) genome sequence.</title>
        <authorList>
            <person name="Petrosino J.F."/>
            <person name="Xiang Q."/>
            <person name="Karpathy S.E."/>
            <person name="Jiang H."/>
            <person name="Yerrapragada S."/>
            <person name="Liu Y."/>
            <person name="Gioia J."/>
            <person name="Hemphill L."/>
            <person name="Gonzalez A."/>
            <person name="Raghavan T.M."/>
            <person name="Uzman A."/>
            <person name="Fox G.E."/>
            <person name="Highlander S."/>
            <person name="Reichard M."/>
            <person name="Morton R.J."/>
            <person name="Clinkenbeard K.D."/>
            <person name="Weinstock G.M."/>
        </authorList>
    </citation>
    <scope>NUCLEOTIDE SEQUENCE [LARGE SCALE GENOMIC DNA]</scope>
    <source>
        <strain>OSU18</strain>
    </source>
</reference>
<accession>Q0BNR0</accession>
<sequence length="166" mass="17559">MSNEVKKNEELIEKLVSVKRHSKTVKGGRIMSFAALTVVGDGKGRIGVGRGKSREVPAAIQKAMENAKKNMVSVNLNNDTLWYPVMSNHGASKVFMQPASAGTGIIAGGAMRSVFEAVGVHNVLAKTYGSTNPANVVRATIAGLAKIKSPDEIAEKRGLSVEEIQG</sequence>
<comment type="function">
    <text evidence="1">With S4 and S12 plays an important role in translational accuracy.</text>
</comment>
<comment type="function">
    <text evidence="1">Located at the back of the 30S subunit body where it stabilizes the conformation of the head with respect to the body.</text>
</comment>
<comment type="subunit">
    <text evidence="1">Part of the 30S ribosomal subunit. Contacts proteins S4 and S8.</text>
</comment>
<comment type="domain">
    <text>The N-terminal domain interacts with the head of the 30S subunit; the C-terminal domain interacts with the body and contacts protein S4. The interaction surface between S4 and S5 is involved in control of translational fidelity.</text>
</comment>
<comment type="similarity">
    <text evidence="1">Belongs to the universal ribosomal protein uS5 family.</text>
</comment>
<proteinExistence type="inferred from homology"/>
<keyword id="KW-0687">Ribonucleoprotein</keyword>
<keyword id="KW-0689">Ribosomal protein</keyword>
<keyword id="KW-0694">RNA-binding</keyword>
<keyword id="KW-0699">rRNA-binding</keyword>
<evidence type="ECO:0000255" key="1">
    <source>
        <dbReference type="HAMAP-Rule" id="MF_01307"/>
    </source>
</evidence>
<evidence type="ECO:0000305" key="2"/>
<gene>
    <name evidence="1" type="primary">rpsE</name>
    <name type="ordered locus">FTH_0248</name>
</gene>
<dbReference type="EMBL" id="CP000437">
    <property type="protein sequence ID" value="ABI82274.1"/>
    <property type="molecule type" value="Genomic_DNA"/>
</dbReference>
<dbReference type="RefSeq" id="WP_003021588.1">
    <property type="nucleotide sequence ID" value="NC_017463.1"/>
</dbReference>
<dbReference type="SMR" id="Q0BNR0"/>
<dbReference type="GeneID" id="75264244"/>
<dbReference type="KEGG" id="fth:FTH_0248"/>
<dbReference type="GO" id="GO:0015935">
    <property type="term" value="C:small ribosomal subunit"/>
    <property type="evidence" value="ECO:0007669"/>
    <property type="project" value="InterPro"/>
</dbReference>
<dbReference type="GO" id="GO:0019843">
    <property type="term" value="F:rRNA binding"/>
    <property type="evidence" value="ECO:0007669"/>
    <property type="project" value="UniProtKB-UniRule"/>
</dbReference>
<dbReference type="GO" id="GO:0003735">
    <property type="term" value="F:structural constituent of ribosome"/>
    <property type="evidence" value="ECO:0007669"/>
    <property type="project" value="InterPro"/>
</dbReference>
<dbReference type="GO" id="GO:0006412">
    <property type="term" value="P:translation"/>
    <property type="evidence" value="ECO:0007669"/>
    <property type="project" value="UniProtKB-UniRule"/>
</dbReference>
<dbReference type="FunFam" id="3.30.160.20:FF:000001">
    <property type="entry name" value="30S ribosomal protein S5"/>
    <property type="match status" value="1"/>
</dbReference>
<dbReference type="FunFam" id="3.30.230.10:FF:000002">
    <property type="entry name" value="30S ribosomal protein S5"/>
    <property type="match status" value="1"/>
</dbReference>
<dbReference type="Gene3D" id="3.30.160.20">
    <property type="match status" value="1"/>
</dbReference>
<dbReference type="Gene3D" id="3.30.230.10">
    <property type="match status" value="1"/>
</dbReference>
<dbReference type="HAMAP" id="MF_01307_B">
    <property type="entry name" value="Ribosomal_uS5_B"/>
    <property type="match status" value="1"/>
</dbReference>
<dbReference type="InterPro" id="IPR020568">
    <property type="entry name" value="Ribosomal_Su5_D2-typ_SF"/>
</dbReference>
<dbReference type="InterPro" id="IPR000851">
    <property type="entry name" value="Ribosomal_uS5"/>
</dbReference>
<dbReference type="InterPro" id="IPR005712">
    <property type="entry name" value="Ribosomal_uS5_bac-type"/>
</dbReference>
<dbReference type="InterPro" id="IPR005324">
    <property type="entry name" value="Ribosomal_uS5_C"/>
</dbReference>
<dbReference type="InterPro" id="IPR013810">
    <property type="entry name" value="Ribosomal_uS5_N"/>
</dbReference>
<dbReference type="InterPro" id="IPR018192">
    <property type="entry name" value="Ribosomal_uS5_N_CS"/>
</dbReference>
<dbReference type="InterPro" id="IPR014721">
    <property type="entry name" value="Ribsml_uS5_D2-typ_fold_subgr"/>
</dbReference>
<dbReference type="NCBIfam" id="TIGR01021">
    <property type="entry name" value="rpsE_bact"/>
    <property type="match status" value="1"/>
</dbReference>
<dbReference type="PANTHER" id="PTHR48277">
    <property type="entry name" value="MITOCHONDRIAL RIBOSOMAL PROTEIN S5"/>
    <property type="match status" value="1"/>
</dbReference>
<dbReference type="PANTHER" id="PTHR48277:SF1">
    <property type="entry name" value="MITOCHONDRIAL RIBOSOMAL PROTEIN S5"/>
    <property type="match status" value="1"/>
</dbReference>
<dbReference type="Pfam" id="PF00333">
    <property type="entry name" value="Ribosomal_S5"/>
    <property type="match status" value="1"/>
</dbReference>
<dbReference type="Pfam" id="PF03719">
    <property type="entry name" value="Ribosomal_S5_C"/>
    <property type="match status" value="1"/>
</dbReference>
<dbReference type="SUPFAM" id="SSF54768">
    <property type="entry name" value="dsRNA-binding domain-like"/>
    <property type="match status" value="1"/>
</dbReference>
<dbReference type="SUPFAM" id="SSF54211">
    <property type="entry name" value="Ribosomal protein S5 domain 2-like"/>
    <property type="match status" value="1"/>
</dbReference>
<dbReference type="PROSITE" id="PS00585">
    <property type="entry name" value="RIBOSOMAL_S5"/>
    <property type="match status" value="1"/>
</dbReference>
<dbReference type="PROSITE" id="PS50881">
    <property type="entry name" value="S5_DSRBD"/>
    <property type="match status" value="1"/>
</dbReference>
<name>RS5_FRATO</name>
<feature type="chain" id="PRO_0000323126" description="Small ribosomal subunit protein uS5">
    <location>
        <begin position="1"/>
        <end position="166"/>
    </location>
</feature>
<feature type="domain" description="S5 DRBM" evidence="1">
    <location>
        <begin position="11"/>
        <end position="74"/>
    </location>
</feature>
<protein>
    <recommendedName>
        <fullName evidence="1">Small ribosomal subunit protein uS5</fullName>
    </recommendedName>
    <alternativeName>
        <fullName evidence="2">30S ribosomal protein S5</fullName>
    </alternativeName>
</protein>